<gene>
    <name type="ordered locus">Ajs_1326</name>
</gene>
<keyword id="KW-0997">Cell inner membrane</keyword>
<keyword id="KW-1003">Cell membrane</keyword>
<keyword id="KW-0472">Membrane</keyword>
<keyword id="KW-0812">Transmembrane</keyword>
<keyword id="KW-1133">Transmembrane helix</keyword>
<name>Y1326_ACISJ</name>
<protein>
    <recommendedName>
        <fullName evidence="1">UPF0060 membrane protein Ajs_1326</fullName>
    </recommendedName>
</protein>
<comment type="subcellular location">
    <subcellularLocation>
        <location evidence="1">Cell inner membrane</location>
        <topology evidence="1">Multi-pass membrane protein</topology>
    </subcellularLocation>
</comment>
<comment type="similarity">
    <text evidence="1">Belongs to the UPF0060 family.</text>
</comment>
<accession>A1W5M0</accession>
<feature type="chain" id="PRO_0000282198" description="UPF0060 membrane protein Ajs_1326">
    <location>
        <begin position="1"/>
        <end position="105"/>
    </location>
</feature>
<feature type="transmembrane region" description="Helical" evidence="1">
    <location>
        <begin position="4"/>
        <end position="24"/>
    </location>
</feature>
<feature type="transmembrane region" description="Helical" evidence="1">
    <location>
        <begin position="30"/>
        <end position="50"/>
    </location>
</feature>
<feature type="transmembrane region" description="Helical" evidence="1">
    <location>
        <begin position="60"/>
        <end position="80"/>
    </location>
</feature>
<feature type="transmembrane region" description="Helical" evidence="1">
    <location>
        <begin position="82"/>
        <end position="102"/>
    </location>
</feature>
<organism>
    <name type="scientific">Acidovorax sp. (strain JS42)</name>
    <dbReference type="NCBI Taxonomy" id="232721"/>
    <lineage>
        <taxon>Bacteria</taxon>
        <taxon>Pseudomonadati</taxon>
        <taxon>Pseudomonadota</taxon>
        <taxon>Betaproteobacteria</taxon>
        <taxon>Burkholderiales</taxon>
        <taxon>Comamonadaceae</taxon>
        <taxon>Acidovorax</taxon>
    </lineage>
</organism>
<evidence type="ECO:0000255" key="1">
    <source>
        <dbReference type="HAMAP-Rule" id="MF_00010"/>
    </source>
</evidence>
<reference key="1">
    <citation type="submission" date="2006-12" db="EMBL/GenBank/DDBJ databases">
        <title>Complete sequence of chromosome 1 of Acidovorax sp. JS42.</title>
        <authorList>
            <person name="Copeland A."/>
            <person name="Lucas S."/>
            <person name="Lapidus A."/>
            <person name="Barry K."/>
            <person name="Detter J.C."/>
            <person name="Glavina del Rio T."/>
            <person name="Dalin E."/>
            <person name="Tice H."/>
            <person name="Pitluck S."/>
            <person name="Chertkov O."/>
            <person name="Brettin T."/>
            <person name="Bruce D."/>
            <person name="Han C."/>
            <person name="Tapia R."/>
            <person name="Gilna P."/>
            <person name="Schmutz J."/>
            <person name="Larimer F."/>
            <person name="Land M."/>
            <person name="Hauser L."/>
            <person name="Kyrpides N."/>
            <person name="Kim E."/>
            <person name="Stahl D."/>
            <person name="Richardson P."/>
        </authorList>
    </citation>
    <scope>NUCLEOTIDE SEQUENCE [LARGE SCALE GENOMIC DNA]</scope>
    <source>
        <strain>JS42</strain>
    </source>
</reference>
<dbReference type="EMBL" id="CP000539">
    <property type="protein sequence ID" value="ABM41545.1"/>
    <property type="molecule type" value="Genomic_DNA"/>
</dbReference>
<dbReference type="SMR" id="A1W5M0"/>
<dbReference type="STRING" id="232721.Ajs_1326"/>
<dbReference type="KEGG" id="ajs:Ajs_1326"/>
<dbReference type="eggNOG" id="COG1742">
    <property type="taxonomic scope" value="Bacteria"/>
</dbReference>
<dbReference type="HOGENOM" id="CLU_117653_2_0_4"/>
<dbReference type="Proteomes" id="UP000000645">
    <property type="component" value="Chromosome"/>
</dbReference>
<dbReference type="GO" id="GO:0005886">
    <property type="term" value="C:plasma membrane"/>
    <property type="evidence" value="ECO:0007669"/>
    <property type="project" value="UniProtKB-SubCell"/>
</dbReference>
<dbReference type="HAMAP" id="MF_00010">
    <property type="entry name" value="UPF0060"/>
    <property type="match status" value="1"/>
</dbReference>
<dbReference type="InterPro" id="IPR003844">
    <property type="entry name" value="UPF0060"/>
</dbReference>
<dbReference type="NCBIfam" id="NF002586">
    <property type="entry name" value="PRK02237.1"/>
    <property type="match status" value="1"/>
</dbReference>
<dbReference type="PANTHER" id="PTHR36116">
    <property type="entry name" value="UPF0060 MEMBRANE PROTEIN YNFA"/>
    <property type="match status" value="1"/>
</dbReference>
<dbReference type="PANTHER" id="PTHR36116:SF1">
    <property type="entry name" value="UPF0060 MEMBRANE PROTEIN YNFA"/>
    <property type="match status" value="1"/>
</dbReference>
<dbReference type="Pfam" id="PF02694">
    <property type="entry name" value="UPF0060"/>
    <property type="match status" value="1"/>
</dbReference>
<dbReference type="SUPFAM" id="SSF103481">
    <property type="entry name" value="Multidrug resistance efflux transporter EmrE"/>
    <property type="match status" value="1"/>
</dbReference>
<sequence length="105" mass="11413">MRTFALFIATALAEIVGCYLPYLWLKQGRSAWLLVPAAASLALFAWLLTLHETAAGRVYAAYGGVYIGVALLWLWIVDGIRPTAWDVAGVAVALTGMGLIMFQPR</sequence>
<proteinExistence type="inferred from homology"/>